<comment type="catalytic activity">
    <reaction evidence="1">
        <text>2 reduced [2Fe-2S]-[ferredoxin] + NADP(+) + H(+) = 2 oxidized [2Fe-2S]-[ferredoxin] + NADPH</text>
        <dbReference type="Rhea" id="RHEA:20125"/>
        <dbReference type="Rhea" id="RHEA-COMP:10000"/>
        <dbReference type="Rhea" id="RHEA-COMP:10001"/>
        <dbReference type="ChEBI" id="CHEBI:15378"/>
        <dbReference type="ChEBI" id="CHEBI:33737"/>
        <dbReference type="ChEBI" id="CHEBI:33738"/>
        <dbReference type="ChEBI" id="CHEBI:57783"/>
        <dbReference type="ChEBI" id="CHEBI:58349"/>
        <dbReference type="EC" id="1.18.1.2"/>
    </reaction>
</comment>
<comment type="cofactor">
    <cofactor evidence="1">
        <name>FAD</name>
        <dbReference type="ChEBI" id="CHEBI:57692"/>
    </cofactor>
    <text evidence="1">Binds 1 FAD per subunit.</text>
</comment>
<comment type="subunit">
    <text evidence="1">Homodimer.</text>
</comment>
<comment type="similarity">
    <text evidence="1">Belongs to the ferredoxin--NADP reductase type 2 family.</text>
</comment>
<comment type="sequence caution" evidence="2">
    <conflict type="erroneous initiation">
        <sequence resource="EMBL-CDS" id="BAC64374"/>
    </conflict>
</comment>
<protein>
    <recommendedName>
        <fullName evidence="1">Ferredoxin--NADP reductase</fullName>
        <shortName evidence="1">FNR</shortName>
        <shortName evidence="1">Fd-NADP(+) reductase</shortName>
        <ecNumber evidence="1">1.18.1.2</ecNumber>
    </recommendedName>
</protein>
<feature type="chain" id="PRO_0000411341" description="Ferredoxin--NADP reductase">
    <location>
        <begin position="1"/>
        <end position="330"/>
    </location>
</feature>
<feature type="binding site" evidence="1">
    <location>
        <position position="35"/>
    </location>
    <ligand>
        <name>FAD</name>
        <dbReference type="ChEBI" id="CHEBI:57692"/>
    </ligand>
</feature>
<feature type="binding site" evidence="1">
    <location>
        <position position="43"/>
    </location>
    <ligand>
        <name>FAD</name>
        <dbReference type="ChEBI" id="CHEBI:57692"/>
    </ligand>
</feature>
<feature type="binding site" evidence="1">
    <location>
        <position position="48"/>
    </location>
    <ligand>
        <name>FAD</name>
        <dbReference type="ChEBI" id="CHEBI:57692"/>
    </ligand>
</feature>
<feature type="binding site" evidence="1">
    <location>
        <position position="90"/>
    </location>
    <ligand>
        <name>FAD</name>
        <dbReference type="ChEBI" id="CHEBI:57692"/>
    </ligand>
</feature>
<feature type="binding site" evidence="1">
    <location>
        <position position="123"/>
    </location>
    <ligand>
        <name>FAD</name>
        <dbReference type="ChEBI" id="CHEBI:57692"/>
    </ligand>
</feature>
<feature type="binding site" evidence="1">
    <location>
        <position position="285"/>
    </location>
    <ligand>
        <name>FAD</name>
        <dbReference type="ChEBI" id="CHEBI:57692"/>
    </ligand>
</feature>
<feature type="binding site" evidence="1">
    <location>
        <position position="326"/>
    </location>
    <ligand>
        <name>FAD</name>
        <dbReference type="ChEBI" id="CHEBI:57692"/>
    </ligand>
</feature>
<reference key="1">
    <citation type="journal article" date="2003" name="Genome Res.">
        <title>Genome sequence of an M3 strain of Streptococcus pyogenes reveals a large-scale genomic rearrangement in invasive strains and new insights into phage evolution.</title>
        <authorList>
            <person name="Nakagawa I."/>
            <person name="Kurokawa K."/>
            <person name="Yamashita A."/>
            <person name="Nakata M."/>
            <person name="Tomiyasu Y."/>
            <person name="Okahashi N."/>
            <person name="Kawabata S."/>
            <person name="Yamazaki K."/>
            <person name="Shiba T."/>
            <person name="Yasunaga T."/>
            <person name="Hayashi H."/>
            <person name="Hattori M."/>
            <person name="Hamada S."/>
        </authorList>
    </citation>
    <scope>NUCLEOTIDE SEQUENCE [LARGE SCALE GENOMIC DNA]</scope>
    <source>
        <strain>SSI-1</strain>
    </source>
</reference>
<proteinExistence type="inferred from homology"/>
<name>FENR_STRPQ</name>
<sequence>MKDKAYDITIIGGGPIGLFAAFYAGLRGVTVKIIESLSELGGQPAILYPEKMIYDIPAYPSLTGAELTENLIKQLSRFEDRTTICLKEEVLTFDKVKGGFSIRTNKAEHFSKAIIIACGNGAFAPRTLGLESEENFADHNLFYNVHQLDQFAGQKVVICGGGDSAVDWALALEDIAESVTVVHRRDAFRAHEHSVELLKASTVNLLTPYVPKALKGIGNLAEKLVIQKVKEDEVLELELDSLIVSFGFSTSNKNLKNWNLDYKRSSITVSPLFQTSQEGIFAIGDAAAYNGKVDLIATGFGEAPTAVNQAINYIYPDRDNRVVHSTSLID</sequence>
<organism>
    <name type="scientific">Streptococcus pyogenes serotype M3 (strain SSI-1)</name>
    <dbReference type="NCBI Taxonomy" id="193567"/>
    <lineage>
        <taxon>Bacteria</taxon>
        <taxon>Bacillati</taxon>
        <taxon>Bacillota</taxon>
        <taxon>Bacilli</taxon>
        <taxon>Lactobacillales</taxon>
        <taxon>Streptococcaceae</taxon>
        <taxon>Streptococcus</taxon>
    </lineage>
</organism>
<gene>
    <name type="ordered locus">SPs1279</name>
</gene>
<evidence type="ECO:0000255" key="1">
    <source>
        <dbReference type="HAMAP-Rule" id="MF_01685"/>
    </source>
</evidence>
<evidence type="ECO:0000305" key="2"/>
<keyword id="KW-0274">FAD</keyword>
<keyword id="KW-0285">Flavoprotein</keyword>
<keyword id="KW-0521">NADP</keyword>
<keyword id="KW-0560">Oxidoreductase</keyword>
<accession>P0DB07</accession>
<accession>Q878I8</accession>
<accession>Q8K7X2</accession>
<dbReference type="EC" id="1.18.1.2" evidence="1"/>
<dbReference type="EMBL" id="BA000034">
    <property type="protein sequence ID" value="BAC64374.1"/>
    <property type="status" value="ALT_INIT"/>
    <property type="molecule type" value="Genomic_DNA"/>
</dbReference>
<dbReference type="RefSeq" id="WP_011054365.1">
    <property type="nucleotide sequence ID" value="NC_004606.1"/>
</dbReference>
<dbReference type="SMR" id="P0DB07"/>
<dbReference type="KEGG" id="sps:SPs1279"/>
<dbReference type="HOGENOM" id="CLU_031864_5_5_9"/>
<dbReference type="GO" id="GO:0004324">
    <property type="term" value="F:ferredoxin-NADP+ reductase activity"/>
    <property type="evidence" value="ECO:0007669"/>
    <property type="project" value="UniProtKB-UniRule"/>
</dbReference>
<dbReference type="GO" id="GO:0050660">
    <property type="term" value="F:flavin adenine dinucleotide binding"/>
    <property type="evidence" value="ECO:0007669"/>
    <property type="project" value="UniProtKB-UniRule"/>
</dbReference>
<dbReference type="GO" id="GO:0050661">
    <property type="term" value="F:NADP binding"/>
    <property type="evidence" value="ECO:0007669"/>
    <property type="project" value="UniProtKB-UniRule"/>
</dbReference>
<dbReference type="Gene3D" id="3.50.50.60">
    <property type="entry name" value="FAD/NAD(P)-binding domain"/>
    <property type="match status" value="2"/>
</dbReference>
<dbReference type="HAMAP" id="MF_01685">
    <property type="entry name" value="FENR2"/>
    <property type="match status" value="1"/>
</dbReference>
<dbReference type="InterPro" id="IPR036188">
    <property type="entry name" value="FAD/NAD-bd_sf"/>
</dbReference>
<dbReference type="InterPro" id="IPR023753">
    <property type="entry name" value="FAD/NAD-binding_dom"/>
</dbReference>
<dbReference type="InterPro" id="IPR022890">
    <property type="entry name" value="Fd--NADP_Rdtase_type_2"/>
</dbReference>
<dbReference type="InterPro" id="IPR050097">
    <property type="entry name" value="Ferredoxin-NADP_redctase_2"/>
</dbReference>
<dbReference type="PANTHER" id="PTHR48105">
    <property type="entry name" value="THIOREDOXIN REDUCTASE 1-RELATED-RELATED"/>
    <property type="match status" value="1"/>
</dbReference>
<dbReference type="Pfam" id="PF07992">
    <property type="entry name" value="Pyr_redox_2"/>
    <property type="match status" value="1"/>
</dbReference>
<dbReference type="PRINTS" id="PR00368">
    <property type="entry name" value="FADPNR"/>
</dbReference>
<dbReference type="PRINTS" id="PR00469">
    <property type="entry name" value="PNDRDTASEII"/>
</dbReference>
<dbReference type="SUPFAM" id="SSF51905">
    <property type="entry name" value="FAD/NAD(P)-binding domain"/>
    <property type="match status" value="1"/>
</dbReference>